<feature type="chain" id="PRO_0000160674" description="Alcohol dehydrogenase 1">
    <location>
        <begin position="1"/>
        <end position="374"/>
    </location>
</feature>
<feature type="binding site" evidence="1">
    <location>
        <position position="46"/>
    </location>
    <ligand>
        <name>Zn(2+)</name>
        <dbReference type="ChEBI" id="CHEBI:29105"/>
        <label>1</label>
        <note>catalytic</note>
    </ligand>
</feature>
<feature type="binding site" evidence="1">
    <location>
        <position position="67"/>
    </location>
    <ligand>
        <name>Zn(2+)</name>
        <dbReference type="ChEBI" id="CHEBI:29105"/>
        <label>1</label>
        <note>catalytic</note>
    </ligand>
</feature>
<feature type="binding site" evidence="1">
    <location>
        <position position="97"/>
    </location>
    <ligand>
        <name>Zn(2+)</name>
        <dbReference type="ChEBI" id="CHEBI:29105"/>
        <label>2</label>
    </ligand>
</feature>
<feature type="binding site" evidence="1">
    <location>
        <position position="100"/>
    </location>
    <ligand>
        <name>Zn(2+)</name>
        <dbReference type="ChEBI" id="CHEBI:29105"/>
        <label>2</label>
    </ligand>
</feature>
<feature type="binding site" evidence="1">
    <location>
        <position position="103"/>
    </location>
    <ligand>
        <name>Zn(2+)</name>
        <dbReference type="ChEBI" id="CHEBI:29105"/>
        <label>2</label>
    </ligand>
</feature>
<feature type="binding site" evidence="1">
    <location>
        <position position="111"/>
    </location>
    <ligand>
        <name>Zn(2+)</name>
        <dbReference type="ChEBI" id="CHEBI:29105"/>
        <label>2</label>
    </ligand>
</feature>
<feature type="binding site" evidence="1">
    <location>
        <position position="174"/>
    </location>
    <ligand>
        <name>Zn(2+)</name>
        <dbReference type="ChEBI" id="CHEBI:29105"/>
        <label>1</label>
        <note>catalytic</note>
    </ligand>
</feature>
<feature type="binding site" evidence="1">
    <location>
        <begin position="199"/>
        <end position="204"/>
    </location>
    <ligand>
        <name>NAD(+)</name>
        <dbReference type="ChEBI" id="CHEBI:57540"/>
    </ligand>
</feature>
<feature type="binding site" evidence="1">
    <location>
        <position position="223"/>
    </location>
    <ligand>
        <name>NAD(+)</name>
        <dbReference type="ChEBI" id="CHEBI:57540"/>
    </ligand>
</feature>
<feature type="binding site" evidence="1">
    <location>
        <position position="228"/>
    </location>
    <ligand>
        <name>NAD(+)</name>
        <dbReference type="ChEBI" id="CHEBI:57540"/>
    </ligand>
</feature>
<feature type="binding site" evidence="1">
    <location>
        <begin position="292"/>
        <end position="294"/>
    </location>
    <ligand>
        <name>NAD(+)</name>
        <dbReference type="ChEBI" id="CHEBI:57540"/>
    </ligand>
</feature>
<feature type="binding site" evidence="1">
    <location>
        <position position="369"/>
    </location>
    <ligand>
        <name>NAD(+)</name>
        <dbReference type="ChEBI" id="CHEBI:57540"/>
    </ligand>
</feature>
<feature type="modified residue" description="N-acetylserine" evidence="2 3">
    <location>
        <position position="1"/>
    </location>
</feature>
<feature type="sequence variant">
    <original>R</original>
    <variation>C</variation>
    <location>
        <position position="112"/>
    </location>
</feature>
<organism>
    <name type="scientific">Struthio camelus</name>
    <name type="common">Common ostrich</name>
    <dbReference type="NCBI Taxonomy" id="8801"/>
    <lineage>
        <taxon>Eukaryota</taxon>
        <taxon>Metazoa</taxon>
        <taxon>Chordata</taxon>
        <taxon>Craniata</taxon>
        <taxon>Vertebrata</taxon>
        <taxon>Euteleostomi</taxon>
        <taxon>Archelosauria</taxon>
        <taxon>Archosauria</taxon>
        <taxon>Dinosauria</taxon>
        <taxon>Saurischia</taxon>
        <taxon>Theropoda</taxon>
        <taxon>Coelurosauria</taxon>
        <taxon>Aves</taxon>
        <taxon>Palaeognathae</taxon>
        <taxon>Struthioniformes</taxon>
        <taxon>Struthionidae</taxon>
        <taxon>Struthio</taxon>
    </lineage>
</organism>
<keyword id="KW-0007">Acetylation</keyword>
<keyword id="KW-0963">Cytoplasm</keyword>
<keyword id="KW-0903">Direct protein sequencing</keyword>
<keyword id="KW-0479">Metal-binding</keyword>
<keyword id="KW-0520">NAD</keyword>
<keyword id="KW-0560">Oxidoreductase</keyword>
<keyword id="KW-0862">Zinc</keyword>
<dbReference type="EC" id="1.1.1.1"/>
<dbReference type="PIR" id="S48157">
    <property type="entry name" value="S48157"/>
</dbReference>
<dbReference type="SMR" id="P80338"/>
<dbReference type="iPTMnet" id="P80338"/>
<dbReference type="GO" id="GO:0005829">
    <property type="term" value="C:cytosol"/>
    <property type="evidence" value="ECO:0007669"/>
    <property type="project" value="TreeGrafter"/>
</dbReference>
<dbReference type="GO" id="GO:0004745">
    <property type="term" value="F:all-trans-retinol dehydrogenase (NAD+) activity"/>
    <property type="evidence" value="ECO:0007669"/>
    <property type="project" value="TreeGrafter"/>
</dbReference>
<dbReference type="GO" id="GO:0008270">
    <property type="term" value="F:zinc ion binding"/>
    <property type="evidence" value="ECO:0007669"/>
    <property type="project" value="InterPro"/>
</dbReference>
<dbReference type="GO" id="GO:0042573">
    <property type="term" value="P:retinoic acid metabolic process"/>
    <property type="evidence" value="ECO:0007669"/>
    <property type="project" value="TreeGrafter"/>
</dbReference>
<dbReference type="GO" id="GO:0042572">
    <property type="term" value="P:retinol metabolic process"/>
    <property type="evidence" value="ECO:0007669"/>
    <property type="project" value="TreeGrafter"/>
</dbReference>
<dbReference type="CDD" id="cd08299">
    <property type="entry name" value="alcohol_DH_class_I_II_IV"/>
    <property type="match status" value="1"/>
</dbReference>
<dbReference type="FunFam" id="3.40.50.720:FF:001857">
    <property type="entry name" value="Alcohol dehydrogenase class 4 mu/sigma chain"/>
    <property type="match status" value="1"/>
</dbReference>
<dbReference type="FunFam" id="3.90.180.10:FF:000001">
    <property type="entry name" value="S-(hydroxymethyl)glutathione dehydrogenase"/>
    <property type="match status" value="1"/>
</dbReference>
<dbReference type="Gene3D" id="3.90.180.10">
    <property type="entry name" value="Medium-chain alcohol dehydrogenases, catalytic domain"/>
    <property type="match status" value="1"/>
</dbReference>
<dbReference type="Gene3D" id="3.40.50.720">
    <property type="entry name" value="NAD(P)-binding Rossmann-like Domain"/>
    <property type="match status" value="1"/>
</dbReference>
<dbReference type="InterPro" id="IPR013149">
    <property type="entry name" value="ADH-like_C"/>
</dbReference>
<dbReference type="InterPro" id="IPR013154">
    <property type="entry name" value="ADH-like_N"/>
</dbReference>
<dbReference type="InterPro" id="IPR002328">
    <property type="entry name" value="ADH_Zn_CS"/>
</dbReference>
<dbReference type="InterPro" id="IPR011032">
    <property type="entry name" value="GroES-like_sf"/>
</dbReference>
<dbReference type="InterPro" id="IPR036291">
    <property type="entry name" value="NAD(P)-bd_dom_sf"/>
</dbReference>
<dbReference type="InterPro" id="IPR020843">
    <property type="entry name" value="PKS_ER"/>
</dbReference>
<dbReference type="PANTHER" id="PTHR43880">
    <property type="entry name" value="ALCOHOL DEHYDROGENASE"/>
    <property type="match status" value="1"/>
</dbReference>
<dbReference type="PANTHER" id="PTHR43880:SF1">
    <property type="entry name" value="ALCOHOL DEHYDROGENASE 1A"/>
    <property type="match status" value="1"/>
</dbReference>
<dbReference type="Pfam" id="PF08240">
    <property type="entry name" value="ADH_N"/>
    <property type="match status" value="1"/>
</dbReference>
<dbReference type="Pfam" id="PF00107">
    <property type="entry name" value="ADH_zinc_N"/>
    <property type="match status" value="1"/>
</dbReference>
<dbReference type="SMART" id="SM00829">
    <property type="entry name" value="PKS_ER"/>
    <property type="match status" value="1"/>
</dbReference>
<dbReference type="SUPFAM" id="SSF50129">
    <property type="entry name" value="GroES-like"/>
    <property type="match status" value="2"/>
</dbReference>
<dbReference type="SUPFAM" id="SSF51735">
    <property type="entry name" value="NAD(P)-binding Rossmann-fold domains"/>
    <property type="match status" value="1"/>
</dbReference>
<dbReference type="PROSITE" id="PS00059">
    <property type="entry name" value="ADH_ZINC"/>
    <property type="match status" value="1"/>
</dbReference>
<reference key="1">
    <citation type="journal article" date="1994" name="Eur. J. Biochem.">
        <title>Diversity of vertebrate class I alcohol dehydrogenase. Mammalian and non-mammalian enzyme functions correlated through the structure of a ratite enzyme.</title>
        <authorList>
            <person name="Estonius M."/>
            <person name="Hjelmqvist L."/>
            <person name="Joernvall H."/>
        </authorList>
    </citation>
    <scope>PROTEIN SEQUENCE</scope>
    <source>
        <tissue>Liver</tissue>
    </source>
</reference>
<reference key="2">
    <citation type="journal article" date="1996" name="FEBS Lett.">
        <title>Alcoholytic deblocking of N-terminally acetylated peptides and proteins for sequence analysis.</title>
        <authorList>
            <person name="Bergman T."/>
            <person name="Gheorghe M.T."/>
            <person name="Hjelmqvist L."/>
            <person name="Joernvall H."/>
        </authorList>
    </citation>
    <scope>PROTEIN SEQUENCE OF 1-13</scope>
    <scope>ACETYLATION AT SER-1</scope>
</reference>
<reference key="3">
    <citation type="journal article" date="1995" name="FEBS Lett.">
        <title>Multiplicity of N-terminal structures of medium-chain alcohol dehydrogenases. Mass-spectrometric analysis of plant, lower vertebrate and higher vertebrate class I, II, and III forms of the enzyme.</title>
        <authorList>
            <person name="Hjelmqvist L."/>
            <person name="Hackett M."/>
            <person name="Shafqat J."/>
            <person name="Danielsson O."/>
            <person name="Iida J."/>
            <person name="Hendrickson R.C."/>
            <person name="Michel H."/>
            <person name="Shabanowitz J."/>
            <person name="Hunt D.F."/>
            <person name="Joernvall H."/>
        </authorList>
    </citation>
    <scope>PARTIAL PROTEIN SEQUENCE</scope>
    <scope>ACETYLATION AT SER-1</scope>
</reference>
<accession>P80338</accession>
<name>ADH1_STRCA</name>
<sequence>STAGKVIKCKAAVLWEPKKPFSIEEVEVAPPKAHEVRVKIIATGICRSDDHVISGVLVMPFPIILGHEAAGVVESVGEGVTSVKPGDKVIPLFVPQCGECSVCLSTKGNLCRKNDIGPASALMPDGTSRFTCKGKAIHHFAGTSTFTEYTVLHETAVAKIDAAAPLEKVCLIGCGFSTGYGAALQTAKVEPGSTCAVFGLGGVGLSVVMGCKAAGASRIIGVDINKDKFAKAKELGATDCVNPKDFTKPIHEVLMEMTGLGVDYSFEVIGHTETMAAALASCHFNYGVSVIVGVPPAAEKLSFDPMLLFSGRTWKGSVFGGWKSKDSVPKLVADYMEKKFVLDPLITHTLPFHKINEGFDLLRTGKSIRSVLLF</sequence>
<proteinExistence type="evidence at protein level"/>
<protein>
    <recommendedName>
        <fullName>Alcohol dehydrogenase 1</fullName>
        <ecNumber>1.1.1.1</ecNumber>
    </recommendedName>
    <alternativeName>
        <fullName>Alcohol dehydrogenase I</fullName>
    </alternativeName>
</protein>
<gene>
    <name type="primary">ADH1</name>
</gene>
<evidence type="ECO:0000250" key="1"/>
<evidence type="ECO:0000269" key="2">
    <source>
    </source>
</evidence>
<evidence type="ECO:0000269" key="3">
    <source>
    </source>
</evidence>
<evidence type="ECO:0000305" key="4"/>
<comment type="catalytic activity">
    <reaction>
        <text>a primary alcohol + NAD(+) = an aldehyde + NADH + H(+)</text>
        <dbReference type="Rhea" id="RHEA:10736"/>
        <dbReference type="ChEBI" id="CHEBI:15378"/>
        <dbReference type="ChEBI" id="CHEBI:15734"/>
        <dbReference type="ChEBI" id="CHEBI:17478"/>
        <dbReference type="ChEBI" id="CHEBI:57540"/>
        <dbReference type="ChEBI" id="CHEBI:57945"/>
        <dbReference type="EC" id="1.1.1.1"/>
    </reaction>
</comment>
<comment type="catalytic activity">
    <reaction>
        <text>a secondary alcohol + NAD(+) = a ketone + NADH + H(+)</text>
        <dbReference type="Rhea" id="RHEA:10740"/>
        <dbReference type="ChEBI" id="CHEBI:15378"/>
        <dbReference type="ChEBI" id="CHEBI:17087"/>
        <dbReference type="ChEBI" id="CHEBI:35681"/>
        <dbReference type="ChEBI" id="CHEBI:57540"/>
        <dbReference type="ChEBI" id="CHEBI:57945"/>
        <dbReference type="EC" id="1.1.1.1"/>
    </reaction>
</comment>
<comment type="cofactor">
    <cofactor evidence="1">
        <name>Zn(2+)</name>
        <dbReference type="ChEBI" id="CHEBI:29105"/>
    </cofactor>
    <text evidence="1">Binds 2 Zn(2+) ions per subunit.</text>
</comment>
<comment type="subunit">
    <text>Homodimer.</text>
</comment>
<comment type="subcellular location">
    <subcellularLocation>
        <location>Cytoplasm</location>
    </subcellularLocation>
</comment>
<comment type="similarity">
    <text evidence="4">Belongs to the zinc-containing alcohol dehydrogenase family. Class-I subfamily.</text>
</comment>